<evidence type="ECO:0000255" key="1">
    <source>
        <dbReference type="HAMAP-Rule" id="MF_01959"/>
    </source>
</evidence>
<accession>Q4ZR01</accession>
<sequence>MNPLRKKRLLIIVALLAGVGLAVTLALSALQENINLFYTPSQIANGEAPLDTRIRAGGMVEKGSLQRSADSLDVRFVVTDFNKSVTITYRGILPDLFREGQGIVALGKLNAQGVVVADEVLAKHDEKYMPPEVTKALRDSGRAAPAASPTPVKQG</sequence>
<organism>
    <name type="scientific">Pseudomonas syringae pv. syringae (strain B728a)</name>
    <dbReference type="NCBI Taxonomy" id="205918"/>
    <lineage>
        <taxon>Bacteria</taxon>
        <taxon>Pseudomonadati</taxon>
        <taxon>Pseudomonadota</taxon>
        <taxon>Gammaproteobacteria</taxon>
        <taxon>Pseudomonadales</taxon>
        <taxon>Pseudomonadaceae</taxon>
        <taxon>Pseudomonas</taxon>
        <taxon>Pseudomonas syringae</taxon>
    </lineage>
</organism>
<comment type="function">
    <text evidence="1">Heme chaperone required for the biogenesis of c-type cytochromes. Transiently binds heme delivered by CcmC and transfers the heme to apo-cytochromes in a process facilitated by CcmF and CcmH.</text>
</comment>
<comment type="subcellular location">
    <subcellularLocation>
        <location evidence="1">Cell inner membrane</location>
        <topology evidence="1">Single-pass type II membrane protein</topology>
        <orientation evidence="1">Periplasmic side</orientation>
    </subcellularLocation>
</comment>
<comment type="similarity">
    <text evidence="1">Belongs to the CcmE/CycJ family.</text>
</comment>
<feature type="chain" id="PRO_0000238842" description="Cytochrome c-type biogenesis protein CcmE">
    <location>
        <begin position="1"/>
        <end position="155"/>
    </location>
</feature>
<feature type="topological domain" description="Cytoplasmic" evidence="1">
    <location>
        <begin position="1"/>
        <end position="8"/>
    </location>
</feature>
<feature type="transmembrane region" description="Helical; Signal-anchor for type II membrane protein" evidence="1">
    <location>
        <begin position="9"/>
        <end position="29"/>
    </location>
</feature>
<feature type="topological domain" description="Periplasmic" evidence="1">
    <location>
        <begin position="30"/>
        <end position="155"/>
    </location>
</feature>
<feature type="binding site" description="covalent" evidence="1">
    <location>
        <position position="124"/>
    </location>
    <ligand>
        <name>heme</name>
        <dbReference type="ChEBI" id="CHEBI:30413"/>
    </ligand>
</feature>
<feature type="binding site" description="axial binding residue" evidence="1">
    <location>
        <position position="128"/>
    </location>
    <ligand>
        <name>heme</name>
        <dbReference type="ChEBI" id="CHEBI:30413"/>
    </ligand>
    <ligandPart>
        <name>Fe</name>
        <dbReference type="ChEBI" id="CHEBI:18248"/>
    </ligandPart>
</feature>
<gene>
    <name evidence="1" type="primary">ccmE</name>
    <name evidence="1" type="synonym">cycJ</name>
    <name type="ordered locus">Psyr_3389</name>
</gene>
<name>CCME_PSEU2</name>
<reference key="1">
    <citation type="journal article" date="2005" name="Proc. Natl. Acad. Sci. U.S.A.">
        <title>Comparison of the complete genome sequences of Pseudomonas syringae pv. syringae B728a and pv. tomato DC3000.</title>
        <authorList>
            <person name="Feil H."/>
            <person name="Feil W.S."/>
            <person name="Chain P."/>
            <person name="Larimer F."/>
            <person name="Dibartolo G."/>
            <person name="Copeland A."/>
            <person name="Lykidis A."/>
            <person name="Trong S."/>
            <person name="Nolan M."/>
            <person name="Goltsman E."/>
            <person name="Thiel J."/>
            <person name="Malfatti S."/>
            <person name="Loper J.E."/>
            <person name="Lapidus A."/>
            <person name="Detter J.C."/>
            <person name="Land M."/>
            <person name="Richardson P.M."/>
            <person name="Kyrpides N.C."/>
            <person name="Ivanova N."/>
            <person name="Lindow S.E."/>
        </authorList>
    </citation>
    <scope>NUCLEOTIDE SEQUENCE [LARGE SCALE GENOMIC DNA]</scope>
    <source>
        <strain>B728a</strain>
    </source>
</reference>
<protein>
    <recommendedName>
        <fullName evidence="1">Cytochrome c-type biogenesis protein CcmE</fullName>
    </recommendedName>
    <alternativeName>
        <fullName evidence="1">Cytochrome c maturation protein E</fullName>
    </alternativeName>
    <alternativeName>
        <fullName evidence="1">Heme chaperone CcmE</fullName>
    </alternativeName>
</protein>
<keyword id="KW-0997">Cell inner membrane</keyword>
<keyword id="KW-1003">Cell membrane</keyword>
<keyword id="KW-0201">Cytochrome c-type biogenesis</keyword>
<keyword id="KW-0349">Heme</keyword>
<keyword id="KW-0408">Iron</keyword>
<keyword id="KW-0472">Membrane</keyword>
<keyword id="KW-0479">Metal-binding</keyword>
<keyword id="KW-0735">Signal-anchor</keyword>
<keyword id="KW-0812">Transmembrane</keyword>
<keyword id="KW-1133">Transmembrane helix</keyword>
<dbReference type="EMBL" id="CP000075">
    <property type="protein sequence ID" value="AAY38421.1"/>
    <property type="molecule type" value="Genomic_DNA"/>
</dbReference>
<dbReference type="RefSeq" id="WP_011268403.1">
    <property type="nucleotide sequence ID" value="NC_007005.1"/>
</dbReference>
<dbReference type="RefSeq" id="YP_236459.1">
    <property type="nucleotide sequence ID" value="NC_007005.1"/>
</dbReference>
<dbReference type="SMR" id="Q4ZR01"/>
<dbReference type="STRING" id="205918.Psyr_3389"/>
<dbReference type="KEGG" id="psb:Psyr_3389"/>
<dbReference type="PATRIC" id="fig|205918.7.peg.3471"/>
<dbReference type="eggNOG" id="COG2332">
    <property type="taxonomic scope" value="Bacteria"/>
</dbReference>
<dbReference type="HOGENOM" id="CLU_079503_1_1_6"/>
<dbReference type="OrthoDB" id="9793584at2"/>
<dbReference type="Proteomes" id="UP000000426">
    <property type="component" value="Chromosome"/>
</dbReference>
<dbReference type="GO" id="GO:0005886">
    <property type="term" value="C:plasma membrane"/>
    <property type="evidence" value="ECO:0007669"/>
    <property type="project" value="UniProtKB-SubCell"/>
</dbReference>
<dbReference type="GO" id="GO:0020037">
    <property type="term" value="F:heme binding"/>
    <property type="evidence" value="ECO:0007669"/>
    <property type="project" value="InterPro"/>
</dbReference>
<dbReference type="GO" id="GO:0046872">
    <property type="term" value="F:metal ion binding"/>
    <property type="evidence" value="ECO:0007669"/>
    <property type="project" value="UniProtKB-KW"/>
</dbReference>
<dbReference type="GO" id="GO:0017004">
    <property type="term" value="P:cytochrome complex assembly"/>
    <property type="evidence" value="ECO:0007669"/>
    <property type="project" value="UniProtKB-KW"/>
</dbReference>
<dbReference type="FunFam" id="2.40.50.140:FF:000104">
    <property type="entry name" value="Cytochrome c-type biogenesis protein CcmE"/>
    <property type="match status" value="1"/>
</dbReference>
<dbReference type="Gene3D" id="2.40.50.140">
    <property type="entry name" value="Nucleic acid-binding proteins"/>
    <property type="match status" value="1"/>
</dbReference>
<dbReference type="HAMAP" id="MF_01959">
    <property type="entry name" value="CcmE"/>
    <property type="match status" value="1"/>
</dbReference>
<dbReference type="InterPro" id="IPR004329">
    <property type="entry name" value="CcmE"/>
</dbReference>
<dbReference type="InterPro" id="IPR036127">
    <property type="entry name" value="CcmE-like_sf"/>
</dbReference>
<dbReference type="InterPro" id="IPR012340">
    <property type="entry name" value="NA-bd_OB-fold"/>
</dbReference>
<dbReference type="NCBIfam" id="NF009727">
    <property type="entry name" value="PRK13254.1-1"/>
    <property type="match status" value="1"/>
</dbReference>
<dbReference type="NCBIfam" id="NF009729">
    <property type="entry name" value="PRK13254.1-3"/>
    <property type="match status" value="1"/>
</dbReference>
<dbReference type="NCBIfam" id="NF009731">
    <property type="entry name" value="PRK13254.1-5"/>
    <property type="match status" value="1"/>
</dbReference>
<dbReference type="PANTHER" id="PTHR34128">
    <property type="entry name" value="CYTOCHROME C-TYPE BIOGENESIS PROTEIN CCME HOMOLOG, MITOCHONDRIAL"/>
    <property type="match status" value="1"/>
</dbReference>
<dbReference type="PANTHER" id="PTHR34128:SF2">
    <property type="entry name" value="CYTOCHROME C-TYPE BIOGENESIS PROTEIN CCME HOMOLOG, MITOCHONDRIAL"/>
    <property type="match status" value="1"/>
</dbReference>
<dbReference type="Pfam" id="PF03100">
    <property type="entry name" value="CcmE"/>
    <property type="match status" value="1"/>
</dbReference>
<dbReference type="SUPFAM" id="SSF82093">
    <property type="entry name" value="Heme chaperone CcmE"/>
    <property type="match status" value="1"/>
</dbReference>
<proteinExistence type="inferred from homology"/>